<sequence>MSQLRLLPSRLGAQAARLLAAHDIPVFGWRSRSSRPPATLPSSKGGGGSSYMEEMYFAWLENPRSVHKSWDSFFRKASEEAFSGSAQPRPPSVVHESRSAVSSRTKTSKLVEDHLAVQSLIRAYQIRGHHVAQLDPLGILDADLDSFVPSDLITTIDKLAFYDLQEADLDKEFQLPTTTFIGGSENTLSLREIIRRLENTYCQHIGLEFMFINDVEQCQWIRQKFETPGVMQFSSEEKRTLLARLVRSMRFEDFLARKWSSEKRFGLEGCEVMIPALKTIIDKSSEMGIENVILGMPHRGRLNVLANVIRKDLEQIFCQFDPKLEAADEGSGDVKYHLGMYHERINRVTNRNITLSLVANPSHLEAVDPVVQGKTKAEQFYRGDAQGKKVMSILVHGDAAFAGQGVVYETFHLSDLPSYTTNGTVHVVVNNQIGFTTDPRMARSSPYPTDVARVVNAPIFHVNADDPEAVIYVCSVAAEWRNTFNKDVVVDLVCYRRRGHNEMDEPMFTQPLMYKQIHRQVPVLKKYADKLIAEGTVTLQEFEEEIAKYDRICEEAYGRSKDKKILHIKHWLDSPWPGFFNVDGEPKSMTCPATGIPEDMLTHIGSVASSVPLEDFKIHTGLSRILRGRADMIKNRTVDWALAEYMAFGSLLKEGIRVRLSGQDVERGTFSHRHHVLHDQEVDRRTCVPMNHLWPDQAPYTVCNSSLSEYGVLGFELGYAMASPNALVLWEAQFGDFHNTAQCIIDQFISTGQAKWVRHNGIVLLLPHGMEGMGPEHSSARPERFLQMSNDDSDAYPAFTKDFEVSQLYDCNWIVVNCSTPANYFHVLRRQILLPFRKPLIIFTPKSLLRHPEAKFSFDQMVSGTSFQRVIPEDGAAARAPEQVRRLIFCTGKVYYDLVKERSSQGLEEKVAITRLEQISPFPFDLIKQEAEKYPGAELAWCQEEHKNMGYYDYISPRFMTILRRARPIWYVGRDPAAAPATGNRNTHLVSLKKFLDTAFNLQAFEGKTF</sequence>
<comment type="function">
    <text evidence="1 3">2-oxoglutarate dehydrogenase (E1-like) component of the 2-oxoglutarate dehydrogenase multienzyme complex (OGDHC) which mediates the decarboxylation of alpha-ketoglutarate in the tricarboxylic acid cycle. The OGDHC complex catalyzes the overall conversion of 2-oxoglutarate to succinyl-CoA and CO(2) while reducing NAD(+) to NADH. The OGDHC complex is mainly active in the mitochondrion (By similarity). Involved in the inhibition of cell proliferation and in apoptosis (By similarity).</text>
</comment>
<comment type="catalytic activity">
    <reaction evidence="1">
        <text>N(6)-[(R)-lipoyl]-L-lysyl-[protein] + 2-oxoglutarate + H(+) = N(6)-[(R)-S(8)-succinyldihydrolipoyl]-L-lysyl-[protein] + CO2</text>
        <dbReference type="Rhea" id="RHEA:12188"/>
        <dbReference type="Rhea" id="RHEA-COMP:10474"/>
        <dbReference type="Rhea" id="RHEA-COMP:20092"/>
        <dbReference type="ChEBI" id="CHEBI:15378"/>
        <dbReference type="ChEBI" id="CHEBI:16526"/>
        <dbReference type="ChEBI" id="CHEBI:16810"/>
        <dbReference type="ChEBI" id="CHEBI:83099"/>
        <dbReference type="ChEBI" id="CHEBI:83120"/>
        <dbReference type="EC" id="1.2.4.2"/>
    </reaction>
    <physiologicalReaction direction="left-to-right" evidence="1">
        <dbReference type="Rhea" id="RHEA:12189"/>
    </physiologicalReaction>
</comment>
<comment type="cofactor">
    <cofactor evidence="2">
        <name>thiamine diphosphate</name>
        <dbReference type="ChEBI" id="CHEBI:58937"/>
    </cofactor>
    <cofactor evidence="2">
        <name>Mg(2+)</name>
        <dbReference type="ChEBI" id="CHEBI:18420"/>
    </cofactor>
</comment>
<comment type="subunit">
    <text evidence="1">The OGDHC complex comprises multiple copies of three catalytic enzyme components, the 2-oxoglutarate dehydrogenase (OGDH/E1), the dihydrolipoamide dehydrogenase (DLST/E2) and the dihydrolipoamide dehydrogenase (DLD/E3). OGDHL/E1-like isoenzyme may replace OGDH in the OGDHC complex in the brain. The presence of either ODGH/E1 or ODGHL/E1-like isoenzyme in the complex may depend on its tissular distribution.</text>
</comment>
<comment type="subcellular location">
    <subcellularLocation>
        <location evidence="3">Mitochondrion matrix</location>
    </subcellularLocation>
</comment>
<comment type="alternative products">
    <event type="alternative splicing"/>
    <isoform>
        <id>Q5R9L8-1</id>
        <name>1</name>
        <sequence type="displayed"/>
    </isoform>
    <isoform>
        <id>Q5R9L8-2</id>
        <name>2</name>
        <sequence type="described" ref="VSP_029368"/>
    </isoform>
</comment>
<comment type="similarity">
    <text evidence="6">Belongs to the alpha-ketoglutarate dehydrogenase family.</text>
</comment>
<comment type="sequence caution" evidence="6">
    <conflict type="erroneous initiation">
        <sequence resource="EMBL-CDS" id="CAH91542"/>
    </conflict>
</comment>
<reference key="1">
    <citation type="submission" date="2004-11" db="EMBL/GenBank/DDBJ databases">
        <authorList>
            <consortium name="The German cDNA consortium"/>
        </authorList>
    </citation>
    <scope>NUCLEOTIDE SEQUENCE [LARGE SCALE MRNA] (ISOFORMS 1 AND 2)</scope>
    <source>
        <tissue>Brain cortex</tissue>
        <tissue>Kidney</tissue>
    </source>
</reference>
<gene>
    <name type="primary">OGDHL</name>
</gene>
<evidence type="ECO:0000250" key="1">
    <source>
        <dbReference type="UniProtKB" id="D3ZQD3"/>
    </source>
</evidence>
<evidence type="ECO:0000250" key="2">
    <source>
        <dbReference type="UniProtKB" id="Q02218"/>
    </source>
</evidence>
<evidence type="ECO:0000250" key="3">
    <source>
        <dbReference type="UniProtKB" id="Q9ULD0"/>
    </source>
</evidence>
<evidence type="ECO:0000255" key="4"/>
<evidence type="ECO:0000303" key="5">
    <source ref="1"/>
</evidence>
<evidence type="ECO:0000305" key="6"/>
<organism>
    <name type="scientific">Pongo abelii</name>
    <name type="common">Sumatran orangutan</name>
    <name type="synonym">Pongo pygmaeus abelii</name>
    <dbReference type="NCBI Taxonomy" id="9601"/>
    <lineage>
        <taxon>Eukaryota</taxon>
        <taxon>Metazoa</taxon>
        <taxon>Chordata</taxon>
        <taxon>Craniata</taxon>
        <taxon>Vertebrata</taxon>
        <taxon>Euteleostomi</taxon>
        <taxon>Mammalia</taxon>
        <taxon>Eutheria</taxon>
        <taxon>Euarchontoglires</taxon>
        <taxon>Primates</taxon>
        <taxon>Haplorrhini</taxon>
        <taxon>Catarrhini</taxon>
        <taxon>Hominidae</taxon>
        <taxon>Pongo</taxon>
    </lineage>
</organism>
<name>OGDHL_PONAB</name>
<protein>
    <recommendedName>
        <fullName evidence="1">2-oxoglutarate dehydrogenase-like, mitochondrial</fullName>
        <ecNumber evidence="1">1.2.4.2</ecNumber>
    </recommendedName>
    <alternativeName>
        <fullName evidence="1">2-oxoglutarate dehydrogenase complex component E1-like</fullName>
        <shortName evidence="1">OGDC-E1-like</shortName>
    </alternativeName>
    <alternativeName>
        <fullName>Alpha-ketoglutarate dehydrogenase-like</fullName>
    </alternativeName>
</protein>
<proteinExistence type="evidence at transcript level"/>
<dbReference type="EC" id="1.2.4.2" evidence="1"/>
<dbReference type="EMBL" id="CR859369">
    <property type="protein sequence ID" value="CAH91542.1"/>
    <property type="status" value="ALT_INIT"/>
    <property type="molecule type" value="mRNA"/>
</dbReference>
<dbReference type="EMBL" id="CR859900">
    <property type="protein sequence ID" value="CAH92056.1"/>
    <property type="molecule type" value="mRNA"/>
</dbReference>
<dbReference type="RefSeq" id="NP_001126195.1">
    <property type="nucleotide sequence ID" value="NM_001132723.1"/>
</dbReference>
<dbReference type="RefSeq" id="NP_001128819.1">
    <property type="nucleotide sequence ID" value="NM_001135347.1"/>
</dbReference>
<dbReference type="SMR" id="Q5R9L8"/>
<dbReference type="FunCoup" id="Q5R9L8">
    <property type="interactions" value="949"/>
</dbReference>
<dbReference type="STRING" id="9601.ENSPPYP00000002634"/>
<dbReference type="GeneID" id="100173162"/>
<dbReference type="KEGG" id="pon:100173162"/>
<dbReference type="CTD" id="55753"/>
<dbReference type="eggNOG" id="KOG0450">
    <property type="taxonomic scope" value="Eukaryota"/>
</dbReference>
<dbReference type="InParanoid" id="Q5R9L8"/>
<dbReference type="OrthoDB" id="413077at2759"/>
<dbReference type="Proteomes" id="UP000001595">
    <property type="component" value="Unplaced"/>
</dbReference>
<dbReference type="GO" id="GO:0005759">
    <property type="term" value="C:mitochondrial matrix"/>
    <property type="evidence" value="ECO:0000250"/>
    <property type="project" value="UniProtKB"/>
</dbReference>
<dbReference type="GO" id="GO:0045252">
    <property type="term" value="C:oxoglutarate dehydrogenase complex"/>
    <property type="evidence" value="ECO:0007669"/>
    <property type="project" value="TreeGrafter"/>
</dbReference>
<dbReference type="GO" id="GO:0046872">
    <property type="term" value="F:metal ion binding"/>
    <property type="evidence" value="ECO:0007669"/>
    <property type="project" value="UniProtKB-KW"/>
</dbReference>
<dbReference type="GO" id="GO:0004591">
    <property type="term" value="F:oxoglutarate dehydrogenase (succinyl-transferring) activity"/>
    <property type="evidence" value="ECO:0007669"/>
    <property type="project" value="UniProtKB-EC"/>
</dbReference>
<dbReference type="GO" id="GO:0030976">
    <property type="term" value="F:thiamine pyrophosphate binding"/>
    <property type="evidence" value="ECO:0007669"/>
    <property type="project" value="InterPro"/>
</dbReference>
<dbReference type="GO" id="GO:0006103">
    <property type="term" value="P:2-oxoglutarate metabolic process"/>
    <property type="evidence" value="ECO:0000250"/>
    <property type="project" value="UniProtKB"/>
</dbReference>
<dbReference type="GO" id="GO:0006096">
    <property type="term" value="P:glycolytic process"/>
    <property type="evidence" value="ECO:0007669"/>
    <property type="project" value="UniProtKB-KW"/>
</dbReference>
<dbReference type="GO" id="GO:0006099">
    <property type="term" value="P:tricarboxylic acid cycle"/>
    <property type="evidence" value="ECO:0000250"/>
    <property type="project" value="UniProtKB"/>
</dbReference>
<dbReference type="CDD" id="cd02016">
    <property type="entry name" value="TPP_E1_OGDC_like"/>
    <property type="match status" value="1"/>
</dbReference>
<dbReference type="FunFam" id="3.40.50.970:FF:000002">
    <property type="entry name" value="2-oxoglutarate dehydrogenase, E1 component"/>
    <property type="match status" value="1"/>
</dbReference>
<dbReference type="FunFam" id="1.10.287.1150:FF:000001">
    <property type="entry name" value="2-oxoglutarate dehydrogenase, mitochondrial isoform X1"/>
    <property type="match status" value="1"/>
</dbReference>
<dbReference type="FunFam" id="3.40.50.11610:FF:000004">
    <property type="entry name" value="2-oxoglutarate dehydrogenase, mitochondrial isoform X1"/>
    <property type="match status" value="1"/>
</dbReference>
<dbReference type="FunFam" id="3.40.50.12470:FF:000001">
    <property type="entry name" value="2-oxoglutarate dehydrogenase, mitochondrial isoform X1"/>
    <property type="match status" value="1"/>
</dbReference>
<dbReference type="Gene3D" id="3.40.50.12470">
    <property type="match status" value="1"/>
</dbReference>
<dbReference type="Gene3D" id="3.40.50.970">
    <property type="match status" value="1"/>
</dbReference>
<dbReference type="Gene3D" id="3.40.50.11610">
    <property type="entry name" value="Multifunctional 2-oxoglutarate metabolism enzyme, C-terminal domain"/>
    <property type="match status" value="1"/>
</dbReference>
<dbReference type="Gene3D" id="1.10.287.1150">
    <property type="entry name" value="TPP helical domain"/>
    <property type="match status" value="1"/>
</dbReference>
<dbReference type="InterPro" id="IPR032106">
    <property type="entry name" value="2-oxogl_dehyd_N"/>
</dbReference>
<dbReference type="InterPro" id="IPR011603">
    <property type="entry name" value="2oxoglutarate_DH_E1"/>
</dbReference>
<dbReference type="InterPro" id="IPR001017">
    <property type="entry name" value="DH_E1"/>
</dbReference>
<dbReference type="InterPro" id="IPR042179">
    <property type="entry name" value="KGD_C_sf"/>
</dbReference>
<dbReference type="InterPro" id="IPR031717">
    <property type="entry name" value="ODO-1/KGD_C"/>
</dbReference>
<dbReference type="InterPro" id="IPR029061">
    <property type="entry name" value="THDP-binding"/>
</dbReference>
<dbReference type="InterPro" id="IPR005475">
    <property type="entry name" value="Transketolase-like_Pyr-bd"/>
</dbReference>
<dbReference type="NCBIfam" id="TIGR00239">
    <property type="entry name" value="2oxo_dh_E1"/>
    <property type="match status" value="1"/>
</dbReference>
<dbReference type="NCBIfam" id="NF006914">
    <property type="entry name" value="PRK09404.1"/>
    <property type="match status" value="1"/>
</dbReference>
<dbReference type="NCBIfam" id="NF008907">
    <property type="entry name" value="PRK12270.1"/>
    <property type="match status" value="1"/>
</dbReference>
<dbReference type="PANTHER" id="PTHR23152">
    <property type="entry name" value="2-OXOGLUTARATE DEHYDROGENASE"/>
    <property type="match status" value="1"/>
</dbReference>
<dbReference type="PANTHER" id="PTHR23152:SF5">
    <property type="entry name" value="2-OXOGLUTARATE DEHYDROGENASE-LIKE, MITOCHONDRIAL"/>
    <property type="match status" value="1"/>
</dbReference>
<dbReference type="Pfam" id="PF16078">
    <property type="entry name" value="2-oxogl_dehyd_N"/>
    <property type="match status" value="1"/>
</dbReference>
<dbReference type="Pfam" id="PF00676">
    <property type="entry name" value="E1_dh"/>
    <property type="match status" value="1"/>
</dbReference>
<dbReference type="Pfam" id="PF16870">
    <property type="entry name" value="OxoGdeHyase_C"/>
    <property type="match status" value="1"/>
</dbReference>
<dbReference type="Pfam" id="PF02779">
    <property type="entry name" value="Transket_pyr"/>
    <property type="match status" value="1"/>
</dbReference>
<dbReference type="PIRSF" id="PIRSF000157">
    <property type="entry name" value="Oxoglu_dh_E1"/>
    <property type="match status" value="1"/>
</dbReference>
<dbReference type="SMART" id="SM00861">
    <property type="entry name" value="Transket_pyr"/>
    <property type="match status" value="1"/>
</dbReference>
<dbReference type="SUPFAM" id="SSF52518">
    <property type="entry name" value="Thiamin diphosphate-binding fold (THDP-binding)"/>
    <property type="match status" value="2"/>
</dbReference>
<keyword id="KW-0025">Alternative splicing</keyword>
<keyword id="KW-0106">Calcium</keyword>
<keyword id="KW-0324">Glycolysis</keyword>
<keyword id="KW-0460">Magnesium</keyword>
<keyword id="KW-0479">Metal-binding</keyword>
<keyword id="KW-0496">Mitochondrion</keyword>
<keyword id="KW-0560">Oxidoreductase</keyword>
<keyword id="KW-1185">Reference proteome</keyword>
<keyword id="KW-0786">Thiamine pyrophosphate</keyword>
<keyword id="KW-0809">Transit peptide</keyword>
<accession>Q5R9L8</accession>
<accession>Q5R854</accession>
<feature type="transit peptide" description="Mitochondrion" evidence="4">
    <location>
        <begin position="1"/>
        <end position="73"/>
    </location>
</feature>
<feature type="chain" id="PRO_0000310984" description="2-oxoglutarate dehydrogenase-like, mitochondrial">
    <location>
        <begin position="74"/>
        <end position="1010"/>
    </location>
</feature>
<feature type="binding site" evidence="2">
    <location>
        <position position="130"/>
    </location>
    <ligand>
        <name>Ca(2+)</name>
        <dbReference type="ChEBI" id="CHEBI:29108"/>
    </ligand>
</feature>
<feature type="binding site" evidence="2">
    <location>
        <position position="143"/>
    </location>
    <ligand>
        <name>Ca(2+)</name>
        <dbReference type="ChEBI" id="CHEBI:29108"/>
    </ligand>
</feature>
<feature type="binding site" evidence="2">
    <location>
        <position position="145"/>
    </location>
    <ligand>
        <name>Ca(2+)</name>
        <dbReference type="ChEBI" id="CHEBI:29108"/>
    </ligand>
</feature>
<feature type="binding site" evidence="2">
    <location>
        <position position="299"/>
    </location>
    <ligand>
        <name>thiamine diphosphate</name>
        <dbReference type="ChEBI" id="CHEBI:58937"/>
    </ligand>
</feature>
<feature type="binding site" evidence="2">
    <location>
        <position position="398"/>
    </location>
    <ligand>
        <name>Mg(2+)</name>
        <dbReference type="ChEBI" id="CHEBI:18420"/>
    </ligand>
</feature>
<feature type="binding site" evidence="2">
    <location>
        <position position="398"/>
    </location>
    <ligand>
        <name>thiamine diphosphate</name>
        <dbReference type="ChEBI" id="CHEBI:58937"/>
    </ligand>
</feature>
<feature type="binding site" evidence="2">
    <location>
        <position position="431"/>
    </location>
    <ligand>
        <name>Mg(2+)</name>
        <dbReference type="ChEBI" id="CHEBI:18420"/>
    </ligand>
</feature>
<feature type="binding site" evidence="2">
    <location>
        <position position="431"/>
    </location>
    <ligand>
        <name>thiamine diphosphate</name>
        <dbReference type="ChEBI" id="CHEBI:58937"/>
    </ligand>
</feature>
<feature type="binding site" evidence="2">
    <location>
        <position position="433"/>
    </location>
    <ligand>
        <name>Mg(2+)</name>
        <dbReference type="ChEBI" id="CHEBI:18420"/>
    </ligand>
</feature>
<feature type="binding site" evidence="2">
    <location>
        <position position="433"/>
    </location>
    <ligand>
        <name>thiamine diphosphate</name>
        <dbReference type="ChEBI" id="CHEBI:58937"/>
    </ligand>
</feature>
<feature type="binding site" evidence="2">
    <location>
        <position position="663"/>
    </location>
    <ligand>
        <name>thiamine diphosphate</name>
        <dbReference type="ChEBI" id="CHEBI:58937"/>
    </ligand>
</feature>
<feature type="splice variant" id="VSP_029368" description="In isoform 2." evidence="5">
    <original>V</original>
    <variation>VSGP</variation>
    <location>
        <position position="862"/>
    </location>
</feature>
<feature type="sequence conflict" description="In Ref. 1; CAH92056." evidence="6" ref="1">
    <original>L</original>
    <variation>F</variation>
    <location>
        <position position="40"/>
    </location>
</feature>
<feature type="sequence conflict" description="In Ref. 1; CAH92056." evidence="6" ref="1">
    <original>W</original>
    <variation>R</variation>
    <location>
        <position position="59"/>
    </location>
</feature>
<feature type="sequence conflict" description="In Ref. 1; CAH92056." evidence="6" ref="1">
    <original>I</original>
    <variation>T</variation>
    <location>
        <position position="633"/>
    </location>
</feature>
<feature type="sequence conflict" description="In Ref. 1; CAH92056." evidence="6" ref="1">
    <original>R</original>
    <variation>H</variation>
    <location>
        <position position="657"/>
    </location>
</feature>
<feature type="sequence conflict" description="In Ref. 1; CAH92056." evidence="6" ref="1">
    <original>F</original>
    <variation>S</variation>
    <location>
        <position position="856"/>
    </location>
</feature>